<feature type="chain" id="PRO_0000453634" description="Staphyloferrin A synthase">
    <location>
        <begin position="1"/>
        <end position="585"/>
    </location>
</feature>
<dbReference type="EC" id="6.3.2.57" evidence="1"/>
<dbReference type="EMBL" id="CP000253">
    <property type="protein sequence ID" value="ABD31456.1"/>
    <property type="molecule type" value="Genomic_DNA"/>
</dbReference>
<dbReference type="RefSeq" id="YP_500903.1">
    <property type="nucleotide sequence ID" value="NC_007795.1"/>
</dbReference>
<dbReference type="SMR" id="Q2FW72"/>
<dbReference type="STRING" id="93061.SAOUHSC_02434"/>
<dbReference type="PaxDb" id="1280-SAXN108_2426"/>
<dbReference type="GeneID" id="3918999"/>
<dbReference type="KEGG" id="sao:SAOUHSC_02434"/>
<dbReference type="PATRIC" id="fig|93061.5.peg.2195"/>
<dbReference type="eggNOG" id="COG4264">
    <property type="taxonomic scope" value="Bacteria"/>
</dbReference>
<dbReference type="HOGENOM" id="CLU_018524_3_1_9"/>
<dbReference type="OrthoDB" id="495728at2"/>
<dbReference type="BioCyc" id="MetaCyc:MONOMER-20491"/>
<dbReference type="Proteomes" id="UP000008816">
    <property type="component" value="Chromosome"/>
</dbReference>
<dbReference type="GO" id="GO:0016881">
    <property type="term" value="F:acid-amino acid ligase activity"/>
    <property type="evidence" value="ECO:0000318"/>
    <property type="project" value="GO_Central"/>
</dbReference>
<dbReference type="GO" id="GO:0005524">
    <property type="term" value="F:ATP binding"/>
    <property type="evidence" value="ECO:0007669"/>
    <property type="project" value="UniProtKB-KW"/>
</dbReference>
<dbReference type="GO" id="GO:0019290">
    <property type="term" value="P:siderophore biosynthetic process"/>
    <property type="evidence" value="ECO:0000318"/>
    <property type="project" value="GO_Central"/>
</dbReference>
<dbReference type="Gene3D" id="1.10.510.40">
    <property type="match status" value="1"/>
</dbReference>
<dbReference type="InterPro" id="IPR007310">
    <property type="entry name" value="Aerobactin_biosyn_IucA/IucC_N"/>
</dbReference>
<dbReference type="InterPro" id="IPR022770">
    <property type="entry name" value="IucA/IucC-like_C"/>
</dbReference>
<dbReference type="InterPro" id="IPR037455">
    <property type="entry name" value="LucA/IucC-like"/>
</dbReference>
<dbReference type="PANTHER" id="PTHR34384">
    <property type="entry name" value="L-2,3-DIAMINOPROPANOATE--CITRATE LIGASE"/>
    <property type="match status" value="1"/>
</dbReference>
<dbReference type="PANTHER" id="PTHR34384:SF6">
    <property type="entry name" value="STAPHYLOFERRIN B SYNTHASE"/>
    <property type="match status" value="1"/>
</dbReference>
<dbReference type="Pfam" id="PF06276">
    <property type="entry name" value="FhuF"/>
    <property type="match status" value="1"/>
</dbReference>
<dbReference type="Pfam" id="PF04183">
    <property type="entry name" value="IucA_IucC"/>
    <property type="match status" value="1"/>
</dbReference>
<comment type="function">
    <text evidence="1">Involved in the biosynthesis of the siderophore staphyloferrin A. Catalyzes the ATP-dependent condensation of a citryl-D-ornithine intermediate, produced by SfnaD, and citrate to form staphyloferrin A.</text>
</comment>
<comment type="catalytic activity">
    <reaction evidence="1">
        <text>N(5)-[(S)-citryl]-D-ornithine + citrate + ATP = staphyloferrin A + AMP + diphosphate + H(+)</text>
        <dbReference type="Rhea" id="RHEA:59140"/>
        <dbReference type="ChEBI" id="CHEBI:15378"/>
        <dbReference type="ChEBI" id="CHEBI:16947"/>
        <dbReference type="ChEBI" id="CHEBI:30616"/>
        <dbReference type="ChEBI" id="CHEBI:33019"/>
        <dbReference type="ChEBI" id="CHEBI:142972"/>
        <dbReference type="ChEBI" id="CHEBI:142973"/>
        <dbReference type="ChEBI" id="CHEBI:456215"/>
        <dbReference type="EC" id="6.3.2.57"/>
    </reaction>
    <physiologicalReaction direction="left-to-right" evidence="1">
        <dbReference type="Rhea" id="RHEA:59141"/>
    </physiologicalReaction>
</comment>
<comment type="pathway">
    <text evidence="1">Siderophore biosynthesis.</text>
</comment>
<comment type="similarity">
    <text evidence="3">Belongs to the IucA/IucC family.</text>
</comment>
<keyword id="KW-0067">ATP-binding</keyword>
<keyword id="KW-0436">Ligase</keyword>
<keyword id="KW-0547">Nucleotide-binding</keyword>
<keyword id="KW-1185">Reference proteome</keyword>
<evidence type="ECO:0000269" key="1">
    <source>
    </source>
</evidence>
<evidence type="ECO:0000303" key="2">
    <source>
    </source>
</evidence>
<evidence type="ECO:0000305" key="3"/>
<evidence type="ECO:0000312" key="4">
    <source>
        <dbReference type="EMBL" id="ABD31456.1"/>
    </source>
</evidence>
<accession>Q2FW72</accession>
<name>SFNAB_STAA8</name>
<sequence length="585" mass="67211">MVYLEWAKADRNIQYRVINAIIKERIYPEQTFISQKGSLIEIQYHMHVLTIEVVRKSALERYEFTGDITYLNKGETSLIITLEGLLDVLNHDFDIPISERLREELIHSRDSLVETYKQMSHRQTLISQSFKFSRLPQDINFFSWLQHVKDSDKTDDLTYSESLVPEGHPTHPLTKTKLPLTMEEVRAYAPEFEKEIPLQIMMIEKDHVVCTAMDGNDQFIIDEIIPEYYNQIRVFLKSLGLKSEDYRAILVHPWQYDHTIGKYFEAWIAKKILIPTPFTILSKATLSFRTMSLIDKPYHVKLPVDAQATSAVRTVSTVTTVDGPKLSYALQNMLNQYPGFKVAMEPFGEYANVDKDRARQLACIIRQKPEIDGKGATVVSASLVNKNPIDQKVIVDSYLEWLNQGITKESITTFIERYAQALIPPLIAFIQNYGIALEAHMQNTVVNLGPHFDIQFLVRDLGGSRIDLETLQHRVSDIKITNDSLIADSIDAVIAKFQHAVIQNQMAELIHHFNQYDCVEETELFNIVQQVVAHAINPTLPHANELKDILFGPTITVKALLNMRMENKVKQYLNIELDNPIKKEV</sequence>
<reference key="1">
    <citation type="book" date="2006" name="Gram positive pathogens, 2nd edition">
        <title>The Staphylococcus aureus NCTC 8325 genome.</title>
        <editorList>
            <person name="Fischetti V."/>
            <person name="Novick R."/>
            <person name="Ferretti J."/>
            <person name="Portnoy D."/>
            <person name="Rood J."/>
        </editorList>
        <authorList>
            <person name="Gillaspy A.F."/>
            <person name="Worrell V."/>
            <person name="Orvis J."/>
            <person name="Roe B.A."/>
            <person name="Dyer D.W."/>
            <person name="Iandolo J.J."/>
        </authorList>
    </citation>
    <scope>NUCLEOTIDE SEQUENCE [LARGE SCALE GENOMIC DNA]</scope>
    <source>
        <strain>NCTC 8325 / PS 47</strain>
    </source>
</reference>
<reference key="2">
    <citation type="journal article" date="2009" name="Biochemistry">
        <title>Identification and characterization of the Staphylococcus aureus gene cluster coding for staphyloferrin A.</title>
        <authorList>
            <person name="Cotton J.L."/>
            <person name="Tao J."/>
            <person name="Balibar C.J."/>
        </authorList>
    </citation>
    <scope>FUNCTION</scope>
    <scope>CATALYTIC ACTIVITY</scope>
    <scope>PATHWAY</scope>
    <source>
        <strain>RN4220</strain>
    </source>
</reference>
<gene>
    <name evidence="2" type="primary">sfnaB</name>
    <name evidence="4" type="ordered locus">SAOUHSC_02434</name>
</gene>
<organism>
    <name type="scientific">Staphylococcus aureus (strain NCTC 8325 / PS 47)</name>
    <dbReference type="NCBI Taxonomy" id="93061"/>
    <lineage>
        <taxon>Bacteria</taxon>
        <taxon>Bacillati</taxon>
        <taxon>Bacillota</taxon>
        <taxon>Bacilli</taxon>
        <taxon>Bacillales</taxon>
        <taxon>Staphylococcaceae</taxon>
        <taxon>Staphylococcus</taxon>
    </lineage>
</organism>
<proteinExistence type="evidence at protein level"/>
<protein>
    <recommendedName>
        <fullName evidence="3">Staphyloferrin A synthase</fullName>
        <ecNumber evidence="1">6.3.2.57</ecNumber>
    </recommendedName>
</protein>